<gene>
    <name type="ordered locus">SAK_1533</name>
</gene>
<feature type="chain" id="PRO_0000298753" description="UPF0346 protein SAK_1533">
    <location>
        <begin position="1"/>
        <end position="71"/>
    </location>
</feature>
<sequence>MRKSFYSWLMTQRNPKSNEPVAILADYAFDETTFPKHSSDFETVSRYLEDEASFSFNLTDFDDIWEDYLNH</sequence>
<accession>Q3K014</accession>
<protein>
    <recommendedName>
        <fullName evidence="1">UPF0346 protein SAK_1533</fullName>
    </recommendedName>
</protein>
<comment type="similarity">
    <text evidence="1">Belongs to the UPF0346 family.</text>
</comment>
<comment type="sequence caution" evidence="2">
    <conflict type="erroneous initiation">
        <sequence resource="EMBL-CDS" id="ABA45053"/>
    </conflict>
</comment>
<dbReference type="EMBL" id="CP000114">
    <property type="protein sequence ID" value="ABA45053.1"/>
    <property type="status" value="ALT_INIT"/>
    <property type="molecule type" value="Genomic_DNA"/>
</dbReference>
<dbReference type="RefSeq" id="WP_001232073.1">
    <property type="nucleotide sequence ID" value="NC_007432.1"/>
</dbReference>
<dbReference type="SMR" id="Q3K014"/>
<dbReference type="KEGG" id="sak:SAK_1533"/>
<dbReference type="HOGENOM" id="CLU_177534_1_0_9"/>
<dbReference type="Gene3D" id="1.10.150.260">
    <property type="entry name" value="YozE SAM-like"/>
    <property type="match status" value="1"/>
</dbReference>
<dbReference type="HAMAP" id="MF_01538">
    <property type="entry name" value="UPF0346"/>
    <property type="match status" value="1"/>
</dbReference>
<dbReference type="InterPro" id="IPR010673">
    <property type="entry name" value="UPF0346"/>
</dbReference>
<dbReference type="InterPro" id="IPR023089">
    <property type="entry name" value="YozE_SAM-like"/>
</dbReference>
<dbReference type="InterPro" id="IPR036806">
    <property type="entry name" value="YozE_SAM-like_sf"/>
</dbReference>
<dbReference type="NCBIfam" id="NF010193">
    <property type="entry name" value="PRK13672.1"/>
    <property type="match status" value="1"/>
</dbReference>
<dbReference type="Pfam" id="PF06855">
    <property type="entry name" value="YozE_SAM_like"/>
    <property type="match status" value="1"/>
</dbReference>
<dbReference type="PIRSF" id="PIRSF037262">
    <property type="entry name" value="UCP037262"/>
    <property type="match status" value="1"/>
</dbReference>
<dbReference type="SUPFAM" id="SSF140652">
    <property type="entry name" value="YozE-like"/>
    <property type="match status" value="1"/>
</dbReference>
<organism>
    <name type="scientific">Streptococcus agalactiae serotype Ia (strain ATCC 27591 / A909 / CDC SS700)</name>
    <dbReference type="NCBI Taxonomy" id="205921"/>
    <lineage>
        <taxon>Bacteria</taxon>
        <taxon>Bacillati</taxon>
        <taxon>Bacillota</taxon>
        <taxon>Bacilli</taxon>
        <taxon>Lactobacillales</taxon>
        <taxon>Streptococcaceae</taxon>
        <taxon>Streptococcus</taxon>
    </lineage>
</organism>
<name>Y1533_STRA1</name>
<proteinExistence type="inferred from homology"/>
<evidence type="ECO:0000255" key="1">
    <source>
        <dbReference type="HAMAP-Rule" id="MF_01538"/>
    </source>
</evidence>
<evidence type="ECO:0000305" key="2"/>
<reference key="1">
    <citation type="journal article" date="2005" name="Proc. Natl. Acad. Sci. U.S.A.">
        <title>Genome analysis of multiple pathogenic isolates of Streptococcus agalactiae: implications for the microbial 'pan-genome'.</title>
        <authorList>
            <person name="Tettelin H."/>
            <person name="Masignani V."/>
            <person name="Cieslewicz M.J."/>
            <person name="Donati C."/>
            <person name="Medini D."/>
            <person name="Ward N.L."/>
            <person name="Angiuoli S.V."/>
            <person name="Crabtree J."/>
            <person name="Jones A.L."/>
            <person name="Durkin A.S."/>
            <person name="DeBoy R.T."/>
            <person name="Davidsen T.M."/>
            <person name="Mora M."/>
            <person name="Scarselli M."/>
            <person name="Margarit y Ros I."/>
            <person name="Peterson J.D."/>
            <person name="Hauser C.R."/>
            <person name="Sundaram J.P."/>
            <person name="Nelson W.C."/>
            <person name="Madupu R."/>
            <person name="Brinkac L.M."/>
            <person name="Dodson R.J."/>
            <person name="Rosovitz M.J."/>
            <person name="Sullivan S.A."/>
            <person name="Daugherty S.C."/>
            <person name="Haft D.H."/>
            <person name="Selengut J."/>
            <person name="Gwinn M.L."/>
            <person name="Zhou L."/>
            <person name="Zafar N."/>
            <person name="Khouri H."/>
            <person name="Radune D."/>
            <person name="Dimitrov G."/>
            <person name="Watkins K."/>
            <person name="O'Connor K.J."/>
            <person name="Smith S."/>
            <person name="Utterback T.R."/>
            <person name="White O."/>
            <person name="Rubens C.E."/>
            <person name="Grandi G."/>
            <person name="Madoff L.C."/>
            <person name="Kasper D.L."/>
            <person name="Telford J.L."/>
            <person name="Wessels M.R."/>
            <person name="Rappuoli R."/>
            <person name="Fraser C.M."/>
        </authorList>
    </citation>
    <scope>NUCLEOTIDE SEQUENCE [LARGE SCALE GENOMIC DNA]</scope>
    <source>
        <strain>ATCC 27591 / A909 / CDC SS700</strain>
    </source>
</reference>